<protein>
    <recommendedName>
        <fullName evidence="2">DNase toxin Tse7</fullName>
        <ecNumber evidence="1">3.1.21.1</ecNumber>
    </recommendedName>
</protein>
<reference key="1">
    <citation type="journal article" date="2000" name="Nature">
        <title>Complete genome sequence of Pseudomonas aeruginosa PAO1, an opportunistic pathogen.</title>
        <authorList>
            <person name="Stover C.K."/>
            <person name="Pham X.-Q.T."/>
            <person name="Erwin A.L."/>
            <person name="Mizoguchi S.D."/>
            <person name="Warrener P."/>
            <person name="Hickey M.J."/>
            <person name="Brinkman F.S.L."/>
            <person name="Hufnagle W.O."/>
            <person name="Kowalik D.J."/>
            <person name="Lagrou M."/>
            <person name="Garber R.L."/>
            <person name="Goltry L."/>
            <person name="Tolentino E."/>
            <person name="Westbrock-Wadman S."/>
            <person name="Yuan Y."/>
            <person name="Brody L.L."/>
            <person name="Coulter S.N."/>
            <person name="Folger K.R."/>
            <person name="Kas A."/>
            <person name="Larbig K."/>
            <person name="Lim R.M."/>
            <person name="Smith K.A."/>
            <person name="Spencer D.H."/>
            <person name="Wong G.K.-S."/>
            <person name="Wu Z."/>
            <person name="Paulsen I.T."/>
            <person name="Reizer J."/>
            <person name="Saier M.H. Jr."/>
            <person name="Hancock R.E.W."/>
            <person name="Lory S."/>
            <person name="Olson M.V."/>
        </authorList>
    </citation>
    <scope>NUCLEOTIDE SEQUENCE [LARGE SCALE GENOMIC DNA]</scope>
    <source>
        <strain>ATCC 15692 / DSM 22644 / CIP 104116 / JCM 14847 / LMG 12228 / 1C / PRS 101 / PAO1</strain>
    </source>
</reference>
<reference key="2">
    <citation type="journal article" date="2018" name="Proc. Natl. Acad. Sci. U.S.A.">
        <title>The Pseudomonas aeruginosa T6SS-VgrG1b spike is topped by a PAAR protein eliciting DNA damage to bacterial competitors.</title>
        <authorList>
            <person name="Pissaridou P."/>
            <person name="Allsopp L.P."/>
            <person name="Wettstadt S."/>
            <person name="Howard S.A."/>
            <person name="Mavridou D.A.I."/>
            <person name="Filloux A."/>
        </authorList>
    </citation>
    <scope>FUNCTION</scope>
    <scope>INTERACTION WITH TSI7</scope>
    <scope>CATALYTIC ACTIVITY</scope>
    <source>
        <strain>ATCC 15692 / DSM 22644 / CIP 104116 / JCM 14847 / LMG 12228 / 1C / PRS 101 / PAO1</strain>
    </source>
</reference>
<evidence type="ECO:0000269" key="1">
    <source>
    </source>
</evidence>
<evidence type="ECO:0000303" key="2">
    <source>
    </source>
</evidence>
<accession>Q9I733</accession>
<organism>
    <name type="scientific">Pseudomonas aeruginosa (strain ATCC 15692 / DSM 22644 / CIP 104116 / JCM 14847 / LMG 12228 / 1C / PRS 101 / PAO1)</name>
    <dbReference type="NCBI Taxonomy" id="208964"/>
    <lineage>
        <taxon>Bacteria</taxon>
        <taxon>Pseudomonadati</taxon>
        <taxon>Pseudomonadota</taxon>
        <taxon>Gammaproteobacteria</taxon>
        <taxon>Pseudomonadales</taxon>
        <taxon>Pseudomonadaceae</taxon>
        <taxon>Pseudomonas</taxon>
    </lineage>
</organism>
<proteinExistence type="evidence at protein level"/>
<feature type="chain" id="PRO_0000449109" description="DNase toxin Tse7">
    <location>
        <begin position="1"/>
        <end position="386"/>
    </location>
</feature>
<name>TSE7_PSEAE</name>
<gene>
    <name evidence="2" type="primary">tse7</name>
    <name type="ordered locus">PA0099</name>
</gene>
<comment type="function">
    <text evidence="1">Type VI secretion exported toxin that via to its DNase activity induces growth arrest and ultimately DNA degradation within target cell (PubMed:30455305). The activity is initially neutralized by a cognate immunity protein Tsi7 (PubMed:30455305).</text>
</comment>
<comment type="catalytic activity">
    <reaction evidence="1">
        <text>Endonucleolytic cleavage to 5'-phosphodinucleotide and 5'-phosphooligonucleotide end-products.</text>
        <dbReference type="EC" id="3.1.21.1"/>
    </reaction>
</comment>
<comment type="subunit">
    <text evidence="1">Interacts with Tsi7.</text>
</comment>
<sequence>MANEVYANNMEISCKAANGKSIAAFPDVCFTPPQAPPTPLGVPIPYPNTGLSKDTTKGTRTIRITRKEVMLKNKSYYKTSYGDEPGRAPKKGIVTSKIKGKVYFTSWSMNVKFESKNVVRHLDLTTHNHASFPGNTPVWPYLDQATVDAGGGPCSNEVKKEKKDCADFKPHGSKDACAGLGAGKPSGKKTSNEADRLADKVAARKCLTARRCALQPYKPNSCCPQQTAHHLIEASALHDKGRGGKGSVPLKGISNYSENKAPCVCAEGVNQNVGTHGLMHTFQSAAAAKSRSGTLQLSNGSSISAKKTTYGTAKRQSMAAMGKVFPQSKCSKECLSAQLDNYHKQCGINARTPIKAVETGQTDVTAATQAIKTRNARLGATRSRVR</sequence>
<keyword id="KW-0378">Hydrolase</keyword>
<keyword id="KW-1185">Reference proteome</keyword>
<keyword id="KW-0843">Virulence</keyword>
<dbReference type="EC" id="3.1.21.1" evidence="1"/>
<dbReference type="EMBL" id="AE004091">
    <property type="protein sequence ID" value="AAG03489.1"/>
    <property type="molecule type" value="Genomic_DNA"/>
</dbReference>
<dbReference type="PIR" id="H83633">
    <property type="entry name" value="H83633"/>
</dbReference>
<dbReference type="RefSeq" id="NP_248789.1">
    <property type="nucleotide sequence ID" value="NC_002516.2"/>
</dbReference>
<dbReference type="RefSeq" id="WP_003115783.1">
    <property type="nucleotide sequence ID" value="NZ_QZGE01000015.1"/>
</dbReference>
<dbReference type="STRING" id="208964.PA0099"/>
<dbReference type="PaxDb" id="208964-PA0099"/>
<dbReference type="GeneID" id="880737"/>
<dbReference type="KEGG" id="pae:PA0099"/>
<dbReference type="PATRIC" id="fig|208964.12.peg.103"/>
<dbReference type="PseudoCAP" id="PA0099"/>
<dbReference type="HOGENOM" id="CLU_066858_1_0_6"/>
<dbReference type="InParanoid" id="Q9I733"/>
<dbReference type="OrthoDB" id="8073614at2"/>
<dbReference type="BioCyc" id="PAER208964:G1FZ6-101-MONOMER"/>
<dbReference type="Proteomes" id="UP000002438">
    <property type="component" value="Chromosome"/>
</dbReference>
<dbReference type="GO" id="GO:0004530">
    <property type="term" value="F:deoxyribonuclease I activity"/>
    <property type="evidence" value="ECO:0007669"/>
    <property type="project" value="UniProtKB-EC"/>
</dbReference>
<dbReference type="GO" id="GO:0033103">
    <property type="term" value="P:protein secretion by the type VI secretion system"/>
    <property type="evidence" value="ECO:0000315"/>
    <property type="project" value="PseudoCAP"/>
</dbReference>
<dbReference type="InterPro" id="IPR028917">
    <property type="entry name" value="Tox-GHH2_domain"/>
</dbReference>
<dbReference type="InterPro" id="IPR025425">
    <property type="entry name" value="Tox_PAAR-like"/>
</dbReference>
<dbReference type="Pfam" id="PF15635">
    <property type="entry name" value="Tox-GHH2"/>
    <property type="match status" value="1"/>
</dbReference>
<dbReference type="Pfam" id="PF13665">
    <property type="entry name" value="Tox-PAAR-like"/>
    <property type="match status" value="1"/>
</dbReference>